<sequence length="317" mass="34569">MNKFKGNKVVLIGNGAVGSSYAFSLVNQSIVDELVIIDLDTEKVRGDVMDLKHATPYSPTTVRVKAGEYSDCHDADLVVICAGAAQKPGETRLDLVSKNLKIFKSIVGEVMASKFDGIFLVATNPVDILAYATWKFSGLPKERVIGSGTILDSARFRLLLSEAFDVAPRSVDAQIIGEHGDTELPVWSHANIAGQPLKTLLEQRPEGKAQIEQIFVQTRDAAYDIIQAKGATYYGVAMGLARITEAIFRNEDAVLTVSALLEGEYDEEDVYIGVPAVINRNGIRNVVEIPLNDEEQSKFAHSAKTLKDIMAEAEELK</sequence>
<feature type="chain" id="PRO_0000168387" description="L-lactate dehydrogenase 1">
    <location>
        <begin position="1"/>
        <end position="317"/>
    </location>
</feature>
<feature type="active site" description="Proton acceptor" evidence="2">
    <location>
        <position position="179"/>
    </location>
</feature>
<feature type="binding site" evidence="2">
    <location>
        <position position="17"/>
    </location>
    <ligand>
        <name>NAD(+)</name>
        <dbReference type="ChEBI" id="CHEBI:57540"/>
    </ligand>
</feature>
<feature type="binding site" evidence="2">
    <location>
        <position position="38"/>
    </location>
    <ligand>
        <name>NAD(+)</name>
        <dbReference type="ChEBI" id="CHEBI:57540"/>
    </ligand>
</feature>
<feature type="binding site" evidence="2">
    <location>
        <position position="43"/>
    </location>
    <ligand>
        <name>NAD(+)</name>
        <dbReference type="ChEBI" id="CHEBI:57540"/>
    </ligand>
</feature>
<feature type="binding site" evidence="2">
    <location>
        <position position="69"/>
    </location>
    <ligand>
        <name>NAD(+)</name>
        <dbReference type="ChEBI" id="CHEBI:57540"/>
    </ligand>
</feature>
<feature type="binding site" evidence="2">
    <location>
        <begin position="83"/>
        <end position="84"/>
    </location>
    <ligand>
        <name>NAD(+)</name>
        <dbReference type="ChEBI" id="CHEBI:57540"/>
    </ligand>
</feature>
<feature type="binding site" evidence="2">
    <location>
        <position position="86"/>
    </location>
    <ligand>
        <name>substrate</name>
    </ligand>
</feature>
<feature type="binding site" evidence="2">
    <location>
        <position position="92"/>
    </location>
    <ligand>
        <name>substrate</name>
    </ligand>
</feature>
<feature type="binding site" evidence="2">
    <location>
        <position position="105"/>
    </location>
    <ligand>
        <name>NAD(+)</name>
        <dbReference type="ChEBI" id="CHEBI:57540"/>
    </ligand>
</feature>
<feature type="binding site" evidence="2">
    <location>
        <begin position="122"/>
        <end position="124"/>
    </location>
    <ligand>
        <name>NAD(+)</name>
        <dbReference type="ChEBI" id="CHEBI:57540"/>
    </ligand>
</feature>
<feature type="binding site" evidence="2">
    <location>
        <begin position="124"/>
        <end position="127"/>
    </location>
    <ligand>
        <name>substrate</name>
    </ligand>
</feature>
<feature type="binding site" evidence="2">
    <location>
        <position position="147"/>
    </location>
    <ligand>
        <name>NAD(+)</name>
        <dbReference type="ChEBI" id="CHEBI:57540"/>
    </ligand>
</feature>
<feature type="binding site" evidence="2">
    <location>
        <begin position="152"/>
        <end position="155"/>
    </location>
    <ligand>
        <name>substrate</name>
    </ligand>
</feature>
<feature type="binding site" evidence="2">
    <location>
        <position position="232"/>
    </location>
    <ligand>
        <name>substrate</name>
    </ligand>
</feature>
<feature type="modified residue" description="Phosphotyrosine" evidence="2">
    <location>
        <position position="223"/>
    </location>
</feature>
<name>LDH1_STAAW</name>
<comment type="function">
    <text evidence="1 2">Catalyzes the conversion of lactate to pyruvate (Potential). Appears to be the primary factor that allows S.aureus growth during nitrosative stress in both aerobically and anaerobically cultured cells (By similarity).</text>
</comment>
<comment type="catalytic activity">
    <reaction evidence="2">
        <text>(S)-lactate + NAD(+) = pyruvate + NADH + H(+)</text>
        <dbReference type="Rhea" id="RHEA:23444"/>
        <dbReference type="ChEBI" id="CHEBI:15361"/>
        <dbReference type="ChEBI" id="CHEBI:15378"/>
        <dbReference type="ChEBI" id="CHEBI:16651"/>
        <dbReference type="ChEBI" id="CHEBI:57540"/>
        <dbReference type="ChEBI" id="CHEBI:57945"/>
        <dbReference type="EC" id="1.1.1.27"/>
    </reaction>
</comment>
<comment type="pathway">
    <text evidence="2">Fermentation; pyruvate fermentation to lactate; (S)-lactate from pyruvate: step 1/1.</text>
</comment>
<comment type="subunit">
    <text evidence="2">Homotetramer.</text>
</comment>
<comment type="subcellular location">
    <subcellularLocation>
        <location evidence="2">Cytoplasm</location>
    </subcellularLocation>
</comment>
<comment type="similarity">
    <text evidence="2 3">Belongs to the LDH/MDH superfamily. LDH family.</text>
</comment>
<dbReference type="EC" id="1.1.1.27" evidence="2"/>
<dbReference type="EMBL" id="BA000033">
    <property type="protein sequence ID" value="BAB94082.1"/>
    <property type="molecule type" value="Genomic_DNA"/>
</dbReference>
<dbReference type="RefSeq" id="WP_001031880.1">
    <property type="nucleotide sequence ID" value="NC_003923.1"/>
</dbReference>
<dbReference type="SMR" id="P65257"/>
<dbReference type="KEGG" id="sam:MW0217"/>
<dbReference type="HOGENOM" id="CLU_045401_1_1_9"/>
<dbReference type="UniPathway" id="UPA00554">
    <property type="reaction ID" value="UER00611"/>
</dbReference>
<dbReference type="GO" id="GO:0005737">
    <property type="term" value="C:cytoplasm"/>
    <property type="evidence" value="ECO:0007669"/>
    <property type="project" value="UniProtKB-SubCell"/>
</dbReference>
<dbReference type="GO" id="GO:0004459">
    <property type="term" value="F:L-lactate dehydrogenase activity"/>
    <property type="evidence" value="ECO:0007669"/>
    <property type="project" value="UniProtKB-UniRule"/>
</dbReference>
<dbReference type="GO" id="GO:0006096">
    <property type="term" value="P:glycolytic process"/>
    <property type="evidence" value="ECO:0007669"/>
    <property type="project" value="UniProtKB-UniRule"/>
</dbReference>
<dbReference type="GO" id="GO:0006089">
    <property type="term" value="P:lactate metabolic process"/>
    <property type="evidence" value="ECO:0007669"/>
    <property type="project" value="TreeGrafter"/>
</dbReference>
<dbReference type="CDD" id="cd05291">
    <property type="entry name" value="HicDH_like"/>
    <property type="match status" value="1"/>
</dbReference>
<dbReference type="FunFam" id="3.40.50.720:FF:000018">
    <property type="entry name" value="Malate dehydrogenase"/>
    <property type="match status" value="1"/>
</dbReference>
<dbReference type="Gene3D" id="3.90.110.10">
    <property type="entry name" value="Lactate dehydrogenase/glycoside hydrolase, family 4, C-terminal"/>
    <property type="match status" value="1"/>
</dbReference>
<dbReference type="Gene3D" id="3.40.50.720">
    <property type="entry name" value="NAD(P)-binding Rossmann-like Domain"/>
    <property type="match status" value="1"/>
</dbReference>
<dbReference type="HAMAP" id="MF_00488">
    <property type="entry name" value="Lactate_dehydrog"/>
    <property type="match status" value="1"/>
</dbReference>
<dbReference type="InterPro" id="IPR001557">
    <property type="entry name" value="L-lactate/malate_DH"/>
</dbReference>
<dbReference type="InterPro" id="IPR011304">
    <property type="entry name" value="L-lactate_DH"/>
</dbReference>
<dbReference type="InterPro" id="IPR018177">
    <property type="entry name" value="L-lactate_DH_AS"/>
</dbReference>
<dbReference type="InterPro" id="IPR022383">
    <property type="entry name" value="Lactate/malate_DH_C"/>
</dbReference>
<dbReference type="InterPro" id="IPR001236">
    <property type="entry name" value="Lactate/malate_DH_N"/>
</dbReference>
<dbReference type="InterPro" id="IPR015955">
    <property type="entry name" value="Lactate_DH/Glyco_Ohase_4_C"/>
</dbReference>
<dbReference type="InterPro" id="IPR036291">
    <property type="entry name" value="NAD(P)-bd_dom_sf"/>
</dbReference>
<dbReference type="NCBIfam" id="TIGR01771">
    <property type="entry name" value="L-LDH-NAD"/>
    <property type="match status" value="1"/>
</dbReference>
<dbReference type="NCBIfam" id="NF000824">
    <property type="entry name" value="PRK00066.1"/>
    <property type="match status" value="1"/>
</dbReference>
<dbReference type="NCBIfam" id="NF004863">
    <property type="entry name" value="PRK06223.1"/>
    <property type="match status" value="1"/>
</dbReference>
<dbReference type="PANTHER" id="PTHR43128">
    <property type="entry name" value="L-2-HYDROXYCARBOXYLATE DEHYDROGENASE (NAD(P)(+))"/>
    <property type="match status" value="1"/>
</dbReference>
<dbReference type="PANTHER" id="PTHR43128:SF16">
    <property type="entry name" value="L-LACTATE DEHYDROGENASE"/>
    <property type="match status" value="1"/>
</dbReference>
<dbReference type="Pfam" id="PF02866">
    <property type="entry name" value="Ldh_1_C"/>
    <property type="match status" value="1"/>
</dbReference>
<dbReference type="Pfam" id="PF00056">
    <property type="entry name" value="Ldh_1_N"/>
    <property type="match status" value="1"/>
</dbReference>
<dbReference type="PIRSF" id="PIRSF000102">
    <property type="entry name" value="Lac_mal_DH"/>
    <property type="match status" value="1"/>
</dbReference>
<dbReference type="PRINTS" id="PR00086">
    <property type="entry name" value="LLDHDRGNASE"/>
</dbReference>
<dbReference type="SUPFAM" id="SSF56327">
    <property type="entry name" value="LDH C-terminal domain-like"/>
    <property type="match status" value="1"/>
</dbReference>
<dbReference type="SUPFAM" id="SSF51735">
    <property type="entry name" value="NAD(P)-binding Rossmann-fold domains"/>
    <property type="match status" value="1"/>
</dbReference>
<dbReference type="PROSITE" id="PS00064">
    <property type="entry name" value="L_LDH"/>
    <property type="match status" value="1"/>
</dbReference>
<organism>
    <name type="scientific">Staphylococcus aureus (strain MW2)</name>
    <dbReference type="NCBI Taxonomy" id="196620"/>
    <lineage>
        <taxon>Bacteria</taxon>
        <taxon>Bacillati</taxon>
        <taxon>Bacillota</taxon>
        <taxon>Bacilli</taxon>
        <taxon>Bacillales</taxon>
        <taxon>Staphylococcaceae</taxon>
        <taxon>Staphylococcus</taxon>
    </lineage>
</organism>
<protein>
    <recommendedName>
        <fullName evidence="2">L-lactate dehydrogenase 1</fullName>
        <shortName evidence="2">L-LDH 1</shortName>
        <ecNumber evidence="2">1.1.1.27</ecNumber>
    </recommendedName>
</protein>
<proteinExistence type="inferred from homology"/>
<accession>P65257</accession>
<accession>Q99WY2</accession>
<reference key="1">
    <citation type="journal article" date="2002" name="Lancet">
        <title>Genome and virulence determinants of high virulence community-acquired MRSA.</title>
        <authorList>
            <person name="Baba T."/>
            <person name="Takeuchi F."/>
            <person name="Kuroda M."/>
            <person name="Yuzawa H."/>
            <person name="Aoki K."/>
            <person name="Oguchi A."/>
            <person name="Nagai Y."/>
            <person name="Iwama N."/>
            <person name="Asano K."/>
            <person name="Naimi T."/>
            <person name="Kuroda H."/>
            <person name="Cui L."/>
            <person name="Yamamoto K."/>
            <person name="Hiramatsu K."/>
        </authorList>
    </citation>
    <scope>NUCLEOTIDE SEQUENCE [LARGE SCALE GENOMIC DNA]</scope>
    <source>
        <strain>MW2</strain>
    </source>
</reference>
<gene>
    <name evidence="2" type="primary">ldh1</name>
    <name type="synonym">lctE</name>
    <name type="synonym">ldhA</name>
    <name type="ordered locus">MW0217</name>
</gene>
<evidence type="ECO:0000250" key="1">
    <source>
        <dbReference type="UniProtKB" id="Q5HJD7"/>
    </source>
</evidence>
<evidence type="ECO:0000255" key="2">
    <source>
        <dbReference type="HAMAP-Rule" id="MF_00488"/>
    </source>
</evidence>
<evidence type="ECO:0000305" key="3"/>
<keyword id="KW-0963">Cytoplasm</keyword>
<keyword id="KW-0520">NAD</keyword>
<keyword id="KW-0560">Oxidoreductase</keyword>
<keyword id="KW-0597">Phosphoprotein</keyword>
<keyword id="KW-0346">Stress response</keyword>